<accession>Q09347</accession>
<reference key="1">
    <citation type="journal article" date="1998" name="Science">
        <title>Genome sequence of the nematode C. elegans: a platform for investigating biology.</title>
        <authorList>
            <consortium name="The C. elegans sequencing consortium"/>
        </authorList>
    </citation>
    <scope>NUCLEOTIDE SEQUENCE [LARGE SCALE GENOMIC DNA]</scope>
    <source>
        <strain>Bristol N2</strain>
    </source>
</reference>
<reference key="2">
    <citation type="journal article" date="2007" name="Mol. Cell. Proteomics">
        <title>Proteomics reveals N-linked glycoprotein diversity in Caenorhabditis elegans and suggests an atypical translocation mechanism for integral membrane proteins.</title>
        <authorList>
            <person name="Kaji H."/>
            <person name="Kamiie J."/>
            <person name="Kawakami H."/>
            <person name="Kido K."/>
            <person name="Yamauchi Y."/>
            <person name="Shinkawa T."/>
            <person name="Taoka M."/>
            <person name="Takahashi N."/>
            <person name="Isobe T."/>
        </authorList>
    </citation>
    <scope>GLYCOSYLATION [LARGE SCALE ANALYSIS] AT ASN-122</scope>
    <scope>IDENTIFICATION BY MASS SPECTROMETRY</scope>
    <source>
        <strain>Bristol N2</strain>
    </source>
</reference>
<keyword id="KW-0325">Glycoprotein</keyword>
<keyword id="KW-1185">Reference proteome</keyword>
<keyword id="KW-0732">Signal</keyword>
<protein>
    <recommendedName>
        <fullName evidence="3">Uncharacterized protein mtre-1</fullName>
    </recommendedName>
    <alternativeName>
        <fullName evidence="3">Male tail tip retraction expression mtre-1</fullName>
    </alternativeName>
</protein>
<dbReference type="EMBL" id="Z47812">
    <property type="protein sequence ID" value="CAA87790.1"/>
    <property type="molecule type" value="Genomic_DNA"/>
</dbReference>
<dbReference type="PIR" id="T24554">
    <property type="entry name" value="T24554"/>
</dbReference>
<dbReference type="RefSeq" id="NP_495688.1">
    <property type="nucleotide sequence ID" value="NM_063287.9"/>
</dbReference>
<dbReference type="BioGRID" id="39624">
    <property type="interactions" value="4"/>
</dbReference>
<dbReference type="DIP" id="DIP-25782N"/>
<dbReference type="FunCoup" id="Q09347">
    <property type="interactions" value="94"/>
</dbReference>
<dbReference type="IntAct" id="Q09347">
    <property type="interactions" value="1"/>
</dbReference>
<dbReference type="STRING" id="6239.T05H10.3.1"/>
<dbReference type="iPTMnet" id="Q09347"/>
<dbReference type="PaxDb" id="6239-T05H10.3"/>
<dbReference type="PeptideAtlas" id="Q09347"/>
<dbReference type="EnsemblMetazoa" id="T05H10.3.1">
    <property type="protein sequence ID" value="T05H10.3.1"/>
    <property type="gene ID" value="WBGene00011508"/>
</dbReference>
<dbReference type="GeneID" id="174292"/>
<dbReference type="KEGG" id="cel:CELE_T05H10.3"/>
<dbReference type="UCSC" id="T05H10.3">
    <property type="organism name" value="c. elegans"/>
</dbReference>
<dbReference type="AGR" id="WB:WBGene00011508"/>
<dbReference type="CTD" id="174292"/>
<dbReference type="WormBase" id="T05H10.3">
    <property type="protein sequence ID" value="CE01640"/>
    <property type="gene ID" value="WBGene00011508"/>
    <property type="gene designation" value="mtre-1"/>
</dbReference>
<dbReference type="eggNOG" id="KOG2532">
    <property type="taxonomic scope" value="Eukaryota"/>
</dbReference>
<dbReference type="GeneTree" id="ENSGT00970000196009"/>
<dbReference type="HOGENOM" id="CLU_131886_0_0_1"/>
<dbReference type="InParanoid" id="Q09347"/>
<dbReference type="OMA" id="EEREYCD"/>
<dbReference type="OrthoDB" id="5834955at2759"/>
<dbReference type="PhylomeDB" id="Q09347"/>
<dbReference type="PRO" id="PR:Q09347"/>
<dbReference type="Proteomes" id="UP000001940">
    <property type="component" value="Chromosome II"/>
</dbReference>
<dbReference type="Bgee" id="WBGene00011508">
    <property type="expression patterns" value="Expressed in pharyngeal muscle cell (C elegans) and 3 other cell types or tissues"/>
</dbReference>
<dbReference type="InterPro" id="IPR056710">
    <property type="entry name" value="DUF7808"/>
</dbReference>
<dbReference type="PANTHER" id="PTHR34493:SF4">
    <property type="entry name" value="PROTEIN CBG13422"/>
    <property type="match status" value="1"/>
</dbReference>
<dbReference type="PANTHER" id="PTHR34493">
    <property type="entry name" value="PROTEIN CBG13422-RELATED"/>
    <property type="match status" value="1"/>
</dbReference>
<dbReference type="Pfam" id="PF25096">
    <property type="entry name" value="DUF7808"/>
    <property type="match status" value="1"/>
</dbReference>
<evidence type="ECO:0000255" key="1"/>
<evidence type="ECO:0000269" key="2">
    <source>
    </source>
</evidence>
<evidence type="ECO:0000305" key="3"/>
<evidence type="ECO:0000312" key="4">
    <source>
        <dbReference type="WormBase" id="T05H10.3"/>
    </source>
</evidence>
<name>YRS3_CAEEL</name>
<feature type="signal peptide" evidence="1">
    <location>
        <begin position="1"/>
        <end position="16"/>
    </location>
</feature>
<feature type="chain" id="PRO_0000014300" description="Uncharacterized protein mtre-1">
    <location>
        <begin position="17"/>
        <end position="158"/>
    </location>
</feature>
<feature type="glycosylation site" description="N-linked (GlcNAc...) asparagine" evidence="2">
    <location>
        <position position="122"/>
    </location>
</feature>
<proteinExistence type="evidence at protein level"/>
<gene>
    <name evidence="4" type="primary">mtre-1</name>
    <name evidence="4" type="ORF">T05H10.3</name>
</gene>
<organism>
    <name type="scientific">Caenorhabditis elegans</name>
    <dbReference type="NCBI Taxonomy" id="6239"/>
    <lineage>
        <taxon>Eukaryota</taxon>
        <taxon>Metazoa</taxon>
        <taxon>Ecdysozoa</taxon>
        <taxon>Nematoda</taxon>
        <taxon>Chromadorea</taxon>
        <taxon>Rhabditida</taxon>
        <taxon>Rhabditina</taxon>
        <taxon>Rhabditomorpha</taxon>
        <taxon>Rhabditoidea</taxon>
        <taxon>Rhabditidae</taxon>
        <taxon>Peloderinae</taxon>
        <taxon>Caenorhabditis</taxon>
    </lineage>
</organism>
<sequence length="158" mass="18369">MFRPILILTILSCVLAYHQYRELKCSTPTNSIRGGPDRAECHLVLKAEELETGRPVPTGLGCWQEDHDGEEREYCDIVCPKSHTVFISYIDQGHRACFNFITYQVEKRNDEHVLWRSGKCLNSTVNYRIGCKFDDPFETQFKSDNEIFAHLRARARRV</sequence>